<name>Y170_UREPA</name>
<keyword id="KW-1185">Reference proteome</keyword>
<sequence>MMKRNELKQLQELQLKINDFYTLVMTTKNLDLCNLSALLEFLGINWGVWVNLSTQRDEFNKKRYEYITKANYGLRMALNELLGRNASYDKEINNQGLRKFRTQEYFKRLDFELANEQKSTDIEDTTITFEKVDDNNKLTIKKLINVI</sequence>
<proteinExistence type="predicted"/>
<organism>
    <name type="scientific">Ureaplasma parvum serovar 3 (strain ATCC 700970)</name>
    <dbReference type="NCBI Taxonomy" id="273119"/>
    <lineage>
        <taxon>Bacteria</taxon>
        <taxon>Bacillati</taxon>
        <taxon>Mycoplasmatota</taxon>
        <taxon>Mycoplasmoidales</taxon>
        <taxon>Mycoplasmoidaceae</taxon>
        <taxon>Ureaplasma</taxon>
    </lineage>
</organism>
<accession>Q9PQX3</accession>
<feature type="chain" id="PRO_0000220827" description="Uncharacterized protein UU170">
    <location>
        <begin position="1"/>
        <end position="147"/>
    </location>
</feature>
<protein>
    <recommendedName>
        <fullName>Uncharacterized protein UU170</fullName>
    </recommendedName>
</protein>
<reference key="1">
    <citation type="journal article" date="2000" name="Nature">
        <title>The complete sequence of the mucosal pathogen Ureaplasma urealyticum.</title>
        <authorList>
            <person name="Glass J.I."/>
            <person name="Lefkowitz E.J."/>
            <person name="Glass J.S."/>
            <person name="Heiner C.R."/>
            <person name="Chen E.Y."/>
            <person name="Cassell G.H."/>
        </authorList>
    </citation>
    <scope>NUCLEOTIDE SEQUENCE [LARGE SCALE GENOMIC DNA]</scope>
    <source>
        <strain>ATCC 700970</strain>
    </source>
</reference>
<dbReference type="EMBL" id="AF222894">
    <property type="protein sequence ID" value="AAF30577.1"/>
    <property type="molecule type" value="Genomic_DNA"/>
</dbReference>
<dbReference type="RefSeq" id="WP_010891700.1">
    <property type="nucleotide sequence ID" value="NC_002162.1"/>
</dbReference>
<dbReference type="EnsemblBacteria" id="AAF30577">
    <property type="protein sequence ID" value="AAF30577"/>
    <property type="gene ID" value="UU170"/>
</dbReference>
<dbReference type="GeneID" id="29672666"/>
<dbReference type="KEGG" id="uur:UU170"/>
<dbReference type="PATRIC" id="fig|273119.6.peg.177"/>
<dbReference type="HOGENOM" id="CLU_1767265_0_0_14"/>
<dbReference type="OrthoDB" id="9878248at2"/>
<dbReference type="Proteomes" id="UP000000423">
    <property type="component" value="Chromosome"/>
</dbReference>
<gene>
    <name type="ordered locus">UU170</name>
</gene>